<comment type="function">
    <text evidence="1">Mediates zinc uptake. May also transport other divalent cations.</text>
</comment>
<comment type="catalytic activity">
    <reaction evidence="1">
        <text>Zn(2+)(in) = Zn(2+)(out)</text>
        <dbReference type="Rhea" id="RHEA:29351"/>
        <dbReference type="ChEBI" id="CHEBI:29105"/>
    </reaction>
</comment>
<comment type="subcellular location">
    <subcellularLocation>
        <location evidence="1">Cell inner membrane</location>
        <topology evidence="1">Multi-pass membrane protein</topology>
    </subcellularLocation>
</comment>
<comment type="similarity">
    <text evidence="1">Belongs to the ZIP transporter (TC 2.A.5) family. ZupT subfamily.</text>
</comment>
<accession>B7LQB7</accession>
<proteinExistence type="inferred from homology"/>
<sequence>MSVPLILTLLAGAATFIGAFLAVLGQKPSNRVLAFSLGFAAGIMLLISLMEMLPAALAVEGMSPVLGYGMFIIGLLGYFGLDRMLPHAHPQDLMQKTQQPLPKSIRRTAILLTLGISLHNFPEGIATFVTASSNLELGMGIALAVALHNIPEGLAVAGPVYAATGSKRTAIFWAGISGMAEILGGVLAWLILGSLISPVVMAAVMAAVAGIMVALSVDELMPLAKEIDPNNNPSYGVLCGMSVMGLSLVVLQTAGIG</sequence>
<gene>
    <name evidence="1" type="primary">zupT</name>
    <name type="ordered locus">EFER_2984</name>
</gene>
<dbReference type="EMBL" id="CU928158">
    <property type="protein sequence ID" value="CAQ90477.1"/>
    <property type="molecule type" value="Genomic_DNA"/>
</dbReference>
<dbReference type="RefSeq" id="WP_000115867.1">
    <property type="nucleotide sequence ID" value="NC_011740.1"/>
</dbReference>
<dbReference type="SMR" id="B7LQB7"/>
<dbReference type="GeneID" id="75060397"/>
<dbReference type="KEGG" id="efe:EFER_2984"/>
<dbReference type="HOGENOM" id="CLU_015114_1_3_6"/>
<dbReference type="OrthoDB" id="9787346at2"/>
<dbReference type="Proteomes" id="UP000000745">
    <property type="component" value="Chromosome"/>
</dbReference>
<dbReference type="GO" id="GO:0005886">
    <property type="term" value="C:plasma membrane"/>
    <property type="evidence" value="ECO:0007669"/>
    <property type="project" value="UniProtKB-SubCell"/>
</dbReference>
<dbReference type="GO" id="GO:0046872">
    <property type="term" value="F:metal ion binding"/>
    <property type="evidence" value="ECO:0007669"/>
    <property type="project" value="UniProtKB-KW"/>
</dbReference>
<dbReference type="GO" id="GO:0005385">
    <property type="term" value="F:zinc ion transmembrane transporter activity"/>
    <property type="evidence" value="ECO:0007669"/>
    <property type="project" value="UniProtKB-UniRule"/>
</dbReference>
<dbReference type="HAMAP" id="MF_00548">
    <property type="entry name" value="ZupT"/>
    <property type="match status" value="1"/>
</dbReference>
<dbReference type="InterPro" id="IPR003689">
    <property type="entry name" value="ZIP"/>
</dbReference>
<dbReference type="InterPro" id="IPR023498">
    <property type="entry name" value="Zn_transptr_ZupT"/>
</dbReference>
<dbReference type="NCBIfam" id="NF003243">
    <property type="entry name" value="PRK04201.1"/>
    <property type="match status" value="1"/>
</dbReference>
<dbReference type="PANTHER" id="PTHR11040:SF205">
    <property type="entry name" value="ZINC TRANSPORTER ZUPT"/>
    <property type="match status" value="1"/>
</dbReference>
<dbReference type="PANTHER" id="PTHR11040">
    <property type="entry name" value="ZINC/IRON TRANSPORTER"/>
    <property type="match status" value="1"/>
</dbReference>
<dbReference type="Pfam" id="PF02535">
    <property type="entry name" value="Zip"/>
    <property type="match status" value="2"/>
</dbReference>
<keyword id="KW-0997">Cell inner membrane</keyword>
<keyword id="KW-1003">Cell membrane</keyword>
<keyword id="KW-0406">Ion transport</keyword>
<keyword id="KW-0408">Iron</keyword>
<keyword id="KW-0472">Membrane</keyword>
<keyword id="KW-0479">Metal-binding</keyword>
<keyword id="KW-0812">Transmembrane</keyword>
<keyword id="KW-1133">Transmembrane helix</keyword>
<keyword id="KW-0813">Transport</keyword>
<keyword id="KW-0862">Zinc</keyword>
<keyword id="KW-0864">Zinc transport</keyword>
<evidence type="ECO:0000255" key="1">
    <source>
        <dbReference type="HAMAP-Rule" id="MF_00548"/>
    </source>
</evidence>
<reference key="1">
    <citation type="journal article" date="2009" name="PLoS Genet.">
        <title>Organised genome dynamics in the Escherichia coli species results in highly diverse adaptive paths.</title>
        <authorList>
            <person name="Touchon M."/>
            <person name="Hoede C."/>
            <person name="Tenaillon O."/>
            <person name="Barbe V."/>
            <person name="Baeriswyl S."/>
            <person name="Bidet P."/>
            <person name="Bingen E."/>
            <person name="Bonacorsi S."/>
            <person name="Bouchier C."/>
            <person name="Bouvet O."/>
            <person name="Calteau A."/>
            <person name="Chiapello H."/>
            <person name="Clermont O."/>
            <person name="Cruveiller S."/>
            <person name="Danchin A."/>
            <person name="Diard M."/>
            <person name="Dossat C."/>
            <person name="Karoui M.E."/>
            <person name="Frapy E."/>
            <person name="Garry L."/>
            <person name="Ghigo J.M."/>
            <person name="Gilles A.M."/>
            <person name="Johnson J."/>
            <person name="Le Bouguenec C."/>
            <person name="Lescat M."/>
            <person name="Mangenot S."/>
            <person name="Martinez-Jehanne V."/>
            <person name="Matic I."/>
            <person name="Nassif X."/>
            <person name="Oztas S."/>
            <person name="Petit M.A."/>
            <person name="Pichon C."/>
            <person name="Rouy Z."/>
            <person name="Ruf C.S."/>
            <person name="Schneider D."/>
            <person name="Tourret J."/>
            <person name="Vacherie B."/>
            <person name="Vallenet D."/>
            <person name="Medigue C."/>
            <person name="Rocha E.P.C."/>
            <person name="Denamur E."/>
        </authorList>
    </citation>
    <scope>NUCLEOTIDE SEQUENCE [LARGE SCALE GENOMIC DNA]</scope>
    <source>
        <strain>ATCC 35469 / DSM 13698 / BCRC 15582 / CCUG 18766 / IAM 14443 / JCM 21226 / LMG 7866 / NBRC 102419 / NCTC 12128 / CDC 0568-73</strain>
    </source>
</reference>
<protein>
    <recommendedName>
        <fullName evidence="1">Zinc transporter ZupT</fullName>
    </recommendedName>
</protein>
<organism>
    <name type="scientific">Escherichia fergusonii (strain ATCC 35469 / DSM 13698 / CCUG 18766 / IAM 14443 / JCM 21226 / LMG 7866 / NBRC 102419 / NCTC 12128 / CDC 0568-73)</name>
    <dbReference type="NCBI Taxonomy" id="585054"/>
    <lineage>
        <taxon>Bacteria</taxon>
        <taxon>Pseudomonadati</taxon>
        <taxon>Pseudomonadota</taxon>
        <taxon>Gammaproteobacteria</taxon>
        <taxon>Enterobacterales</taxon>
        <taxon>Enterobacteriaceae</taxon>
        <taxon>Escherichia</taxon>
    </lineage>
</organism>
<name>ZUPT_ESCF3</name>
<feature type="chain" id="PRO_1000128956" description="Zinc transporter ZupT">
    <location>
        <begin position="1"/>
        <end position="257"/>
    </location>
</feature>
<feature type="transmembrane region" description="Helical" evidence="1">
    <location>
        <begin position="5"/>
        <end position="25"/>
    </location>
</feature>
<feature type="transmembrane region" description="Helical" evidence="1">
    <location>
        <begin position="32"/>
        <end position="52"/>
    </location>
</feature>
<feature type="transmembrane region" description="Helical" evidence="1">
    <location>
        <begin position="61"/>
        <end position="81"/>
    </location>
</feature>
<feature type="transmembrane region" description="Helical" evidence="1">
    <location>
        <begin position="109"/>
        <end position="129"/>
    </location>
</feature>
<feature type="transmembrane region" description="Helical" evidence="1">
    <location>
        <begin position="137"/>
        <end position="157"/>
    </location>
</feature>
<feature type="transmembrane region" description="Helical" evidence="1">
    <location>
        <begin position="182"/>
        <end position="202"/>
    </location>
</feature>
<feature type="transmembrane region" description="Helical" evidence="1">
    <location>
        <begin position="203"/>
        <end position="223"/>
    </location>
</feature>
<feature type="transmembrane region" description="Helical" evidence="1">
    <location>
        <begin position="236"/>
        <end position="256"/>
    </location>
</feature>
<feature type="binding site" description="M2 metal binding site" evidence="1">
    <location>
        <position position="120"/>
    </location>
    <ligand>
        <name>Fe(2+)</name>
        <dbReference type="ChEBI" id="CHEBI:29033"/>
    </ligand>
</feature>
<feature type="binding site" description="M2 metal binding site" evidence="1">
    <location>
        <position position="123"/>
    </location>
    <ligand>
        <name>Fe(2+)</name>
        <dbReference type="ChEBI" id="CHEBI:29033"/>
    </ligand>
</feature>
<feature type="binding site" description="M1 metal binding site" evidence="1">
    <location>
        <position position="123"/>
    </location>
    <ligand>
        <name>Zn(2+)</name>
        <dbReference type="ChEBI" id="CHEBI:29105"/>
    </ligand>
</feature>
<feature type="binding site" description="M1 metal binding site" evidence="1">
    <location>
        <position position="148"/>
    </location>
    <ligand>
        <name>Zn(2+)</name>
        <dbReference type="ChEBI" id="CHEBI:29105"/>
    </ligand>
</feature>
<feature type="binding site" description="M2 metal binding site" evidence="1">
    <location>
        <position position="149"/>
    </location>
    <ligand>
        <name>Fe(2+)</name>
        <dbReference type="ChEBI" id="CHEBI:29033"/>
    </ligand>
</feature>
<feature type="binding site" description="M2 metal binding site" evidence="1">
    <location>
        <position position="152"/>
    </location>
    <ligand>
        <name>Fe(2+)</name>
        <dbReference type="ChEBI" id="CHEBI:29033"/>
    </ligand>
</feature>
<feature type="binding site" description="M1 metal binding site" evidence="1">
    <location>
        <position position="152"/>
    </location>
    <ligand>
        <name>Zn(2+)</name>
        <dbReference type="ChEBI" id="CHEBI:29105"/>
    </ligand>
</feature>
<feature type="binding site" description="M2 metal binding site" evidence="1">
    <location>
        <position position="181"/>
    </location>
    <ligand>
        <name>Fe(2+)</name>
        <dbReference type="ChEBI" id="CHEBI:29033"/>
    </ligand>
</feature>